<feature type="signal peptide">
    <location>
        <begin position="1"/>
        <end position="21"/>
    </location>
</feature>
<feature type="chain" id="PRO_0000009285" description="Chaperone protein PapD">
    <location>
        <begin position="22"/>
        <end position="239"/>
    </location>
</feature>
<feature type="disulfide bond">
    <location>
        <begin position="228"/>
        <end position="233"/>
    </location>
</feature>
<feature type="mutagenesis site" description="Loss of chaperone activity, no interaction with PapG, no longer suppresses PapA P pilus subunit toxicity." evidence="3">
    <original>R</original>
    <variation>A</variation>
    <variation>G</variation>
    <location>
        <position position="29"/>
    </location>
</feature>
<feature type="mutagenesis site" description="Loss of chaperone activity, no interaction with PapG." evidence="3">
    <original>K</original>
    <variation>A</variation>
    <location>
        <position position="133"/>
    </location>
</feature>
<feature type="sequence conflict" description="In Ref. 2; no nucleotide entry." evidence="4" ref="2">
    <original>E</original>
    <variation>D</variation>
    <location>
        <position position="81"/>
    </location>
</feature>
<feature type="strand" evidence="5">
    <location>
        <begin position="23"/>
        <end position="26"/>
    </location>
</feature>
<feature type="strand" evidence="5">
    <location>
        <begin position="28"/>
        <end position="33"/>
    </location>
</feature>
<feature type="strand" evidence="5">
    <location>
        <begin position="36"/>
        <end position="45"/>
    </location>
</feature>
<feature type="strand" evidence="5">
    <location>
        <begin position="48"/>
        <end position="50"/>
    </location>
</feature>
<feature type="strand" evidence="5">
    <location>
        <begin position="52"/>
        <end position="59"/>
    </location>
</feature>
<feature type="strand" evidence="5">
    <location>
        <begin position="68"/>
        <end position="74"/>
    </location>
</feature>
<feature type="strand" evidence="5">
    <location>
        <begin position="76"/>
        <end position="80"/>
    </location>
</feature>
<feature type="strand" evidence="5">
    <location>
        <begin position="85"/>
        <end position="92"/>
    </location>
</feature>
<feature type="helix" evidence="5">
    <location>
        <begin position="94"/>
        <end position="98"/>
    </location>
</feature>
<feature type="strand" evidence="5">
    <location>
        <begin position="101"/>
        <end position="103"/>
    </location>
</feature>
<feature type="strand" evidence="5">
    <location>
        <begin position="105"/>
        <end position="114"/>
    </location>
</feature>
<feature type="strand" evidence="5">
    <location>
        <begin position="123"/>
        <end position="137"/>
    </location>
</feature>
<feature type="helix" evidence="5">
    <location>
        <begin position="139"/>
        <end position="141"/>
    </location>
</feature>
<feature type="helix" evidence="5">
    <location>
        <begin position="150"/>
        <end position="152"/>
    </location>
</feature>
<feature type="strand" evidence="5">
    <location>
        <begin position="154"/>
        <end position="158"/>
    </location>
</feature>
<feature type="strand" evidence="5">
    <location>
        <begin position="161"/>
        <end position="166"/>
    </location>
</feature>
<feature type="strand" evidence="5">
    <location>
        <begin position="168"/>
        <end position="170"/>
    </location>
</feature>
<feature type="strand" evidence="5">
    <location>
        <begin position="172"/>
        <end position="180"/>
    </location>
</feature>
<feature type="helix" evidence="5">
    <location>
        <begin position="181"/>
        <end position="186"/>
    </location>
</feature>
<feature type="strand" evidence="5">
    <location>
        <begin position="192"/>
        <end position="194"/>
    </location>
</feature>
<feature type="strand" evidence="5">
    <location>
        <begin position="198"/>
        <end position="203"/>
    </location>
</feature>
<feature type="strand" evidence="5">
    <location>
        <begin position="211"/>
        <end position="215"/>
    </location>
</feature>
<feature type="strand" evidence="5">
    <location>
        <begin position="223"/>
        <end position="229"/>
    </location>
</feature>
<feature type="strand" evidence="5">
    <location>
        <begin position="232"/>
        <end position="235"/>
    </location>
</feature>
<sequence>MIRKKILMAAIPLFVISGADAAVSLDRTRAVFDGSEKSMTLDISNDNKQLPYLAQAWIENENQEKIITGPVIATPPVQRLEPGAKSMVRLSTTPDISKLPQDRESLFYFNLREIPPRSEKANVLQIALQTKIKLFYRPAAIKTRPNEVWQDQLILNKVSGGYRIENPTPYYVTVIGLGGSEKQAEEGEFETVMLSPRSEQTVKSANYNTPYLSYINDYGGRPVLSFICNGSRCSVKKEK</sequence>
<accession>P15319</accession>
<organism>
    <name type="scientific">Escherichia coli</name>
    <dbReference type="NCBI Taxonomy" id="562"/>
    <lineage>
        <taxon>Bacteria</taxon>
        <taxon>Pseudomonadati</taxon>
        <taxon>Pseudomonadota</taxon>
        <taxon>Gammaproteobacteria</taxon>
        <taxon>Enterobacterales</taxon>
        <taxon>Enterobacteriaceae</taxon>
        <taxon>Escherichia</taxon>
    </lineage>
</organism>
<protein>
    <recommendedName>
        <fullName>Chaperone protein PapD</fullName>
    </recommendedName>
</protein>
<keyword id="KW-0002">3D-structure</keyword>
<keyword id="KW-0143">Chaperone</keyword>
<keyword id="KW-1015">Disulfide bond</keyword>
<keyword id="KW-1029">Fimbrium biogenesis</keyword>
<keyword id="KW-0393">Immunoglobulin domain</keyword>
<keyword id="KW-0574">Periplasm</keyword>
<keyword id="KW-0732">Signal</keyword>
<comment type="function">
    <text evidence="3">Binds and caps interactive surfaces on P pilus subunits to prevent them from participating in non-productive interactions. Facilitates the import of P pilus subunits into the periplasm, probably also facilitates their folding (PubMed:9351822). Chaperone-subunit complexes are then targeted to the PapC outer membrane usher where the chaperone must uncap from the subunits. Coexpression of this chaperone with individual, otherwise toxic, P pilus subunits (tested with PapA, PapE and PapG) suppresses their growth inhibitory phenotype (PubMed:9351822).</text>
</comment>
<comment type="subunit">
    <text evidence="1 3">Interacts with substrates PapG and PapK.</text>
</comment>
<comment type="interaction">
    <interactant intactId="EBI-1034993">
        <id>P15319</id>
    </interactant>
    <interactant intactId="EBI-1034986">
        <id>P08407</id>
        <label>papE</label>
    </interactant>
    <organismsDiffer>false</organismsDiffer>
    <experiments>2</experiments>
</comment>
<comment type="interaction">
    <interactant intactId="EBI-1034993">
        <id>P15319</id>
    </interactant>
    <interactant intactId="EBI-15725486">
        <id>P08408</id>
        <label>papF</label>
    </interactant>
    <organismsDiffer>false</organismsDiffer>
    <experiments>5</experiments>
</comment>
<comment type="interaction">
    <interactant intactId="EBI-1034993">
        <id>P15319</id>
    </interactant>
    <interactant intactId="EBI-15725472">
        <id>P13720</id>
        <label>papGI</label>
    </interactant>
    <organismsDiffer>false</organismsDiffer>
    <experiments>2</experiments>
</comment>
<comment type="subcellular location">
    <subcellularLocation>
        <location evidence="3">Periplasm</location>
    </subcellularLocation>
</comment>
<comment type="miscellaneous">
    <text evidence="2">PapD donates its G1 beta strand to complete the Ig fold of PapK (donor strand complementation).</text>
</comment>
<comment type="similarity">
    <text evidence="4">Belongs to the periplasmic pilus chaperone family.</text>
</comment>
<gene>
    <name type="primary">papD</name>
</gene>
<name>PAPD_ECOLX</name>
<reference key="1">
    <citation type="journal article" date="1992" name="Mol. Microbiol.">
        <title>Horizontal gene transfer of the Escherichia coli pap and prs pili operons as a mechanism for the development of tissue-specific adhesive properties.</title>
        <authorList>
            <person name="Marklund B.-I."/>
            <person name="Tennent J.M."/>
            <person name="Garcia E."/>
            <person name="Hamers A."/>
            <person name="Baga M."/>
            <person name="Lindberg F."/>
            <person name="Gaastra W."/>
            <person name="Normark S."/>
        </authorList>
    </citation>
    <scope>NUCLEOTIDE SEQUENCE [GENOMIC DNA]</scope>
    <source>
        <strain>ATCC 700336 / J96 / UPEC</strain>
    </source>
</reference>
<reference key="2">
    <citation type="thesis" date="1987" institute="University of Umea" country="Sweden">
        <authorList>
            <person name="Lindberg F."/>
        </authorList>
    </citation>
    <scope>NUCLEOTIDE SEQUENCE [GENOMIC DNA]</scope>
</reference>
<reference key="3">
    <citation type="journal article" date="1997" name="EMBO J.">
        <title>The chaperone-assisted membrane release and folding pathway is sensed by two signal transduction systems.</title>
        <authorList>
            <person name="Jones C.H."/>
            <person name="Danese P.N."/>
            <person name="Pinkner J.S."/>
            <person name="Silhavy T.J."/>
            <person name="Hultgren S.J."/>
        </authorList>
    </citation>
    <scope>FUNCTION</scope>
    <scope>SUBUNIT</scope>
    <scope>SUBCELLULAR LOCATION</scope>
    <scope>MUTAGENESIS OF ARG-29 AND LYS-133</scope>
</reference>
<reference key="4">
    <citation type="journal article" date="1998" name="J. Struct. Biol.">
        <title>Pilus biogenesis via the chaperone/usher pathway: an integration of structure and function.</title>
        <authorList>
            <person name="Hung D.L."/>
            <person name="Hultgren S.J."/>
        </authorList>
    </citation>
    <scope>REVIEW</scope>
</reference>
<reference key="5">
    <citation type="journal article" date="1989" name="Nature">
        <title>Crystal structure of chaperone protein PapD reveals an immunoglobulin fold.</title>
        <authorList>
            <person name="Holmgren A."/>
            <person name="Braenden C.-I."/>
        </authorList>
    </citation>
    <scope>X-RAY CRYSTALLOGRAPHY (2.5 ANGSTROMS) OF 22-239</scope>
</reference>
<reference key="6">
    <citation type="journal article" date="1999" name="Science">
        <title>Structural basis of chaperone function and pilus biogenesis.</title>
        <authorList>
            <person name="Sauer F.G."/>
            <person name="Fuetterer K."/>
            <person name="Pinkner J.S."/>
            <person name="Dodson K.W."/>
            <person name="Hultgren S.J."/>
            <person name="Waksman G."/>
        </authorList>
    </citation>
    <scope>X-RAY CRYSTALLOGRAPHY (2.4 ANGSTROMS) OF 22-239 IN THE PAPD-PAPK COMPLEX</scope>
    <scope>SUBUNIT</scope>
</reference>
<evidence type="ECO:0000269" key="1">
    <source>
    </source>
</evidence>
<evidence type="ECO:0000269" key="2">
    <source>
    </source>
</evidence>
<evidence type="ECO:0000269" key="3">
    <source>
    </source>
</evidence>
<evidence type="ECO:0000305" key="4"/>
<evidence type="ECO:0007829" key="5">
    <source>
        <dbReference type="PDB" id="2XG5"/>
    </source>
</evidence>
<proteinExistence type="evidence at protein level"/>
<dbReference type="EMBL" id="X61239">
    <property type="protein sequence ID" value="CAA43565.1"/>
    <property type="molecule type" value="Genomic_DNA"/>
</dbReference>
<dbReference type="PIR" id="A33491">
    <property type="entry name" value="A33491"/>
</dbReference>
<dbReference type="RefSeq" id="WP_001363619.1">
    <property type="nucleotide sequence ID" value="NZ_WVVH01000110.1"/>
</dbReference>
<dbReference type="PDB" id="1N0L">
    <property type="method" value="X-ray"/>
    <property type="resolution" value="2.30 A"/>
    <property type="chains" value="A/C=22-239"/>
</dbReference>
<dbReference type="PDB" id="1PDK">
    <property type="method" value="X-ray"/>
    <property type="resolution" value="2.40 A"/>
    <property type="chains" value="A=22-239"/>
</dbReference>
<dbReference type="PDB" id="1QPP">
    <property type="method" value="X-ray"/>
    <property type="resolution" value="2.60 A"/>
    <property type="chains" value="A/B=22-239"/>
</dbReference>
<dbReference type="PDB" id="1QPX">
    <property type="method" value="X-ray"/>
    <property type="resolution" value="2.40 A"/>
    <property type="chains" value="A/B=22-239"/>
</dbReference>
<dbReference type="PDB" id="2J2Z">
    <property type="method" value="X-ray"/>
    <property type="resolution" value="2.30 A"/>
    <property type="chains" value="A=22-239"/>
</dbReference>
<dbReference type="PDB" id="2J7L">
    <property type="method" value="X-ray"/>
    <property type="resolution" value="2.60 A"/>
    <property type="chains" value="A=22-239"/>
</dbReference>
<dbReference type="PDB" id="2UY6">
    <property type="method" value="X-ray"/>
    <property type="resolution" value="2.50 A"/>
    <property type="chains" value="A=22-239"/>
</dbReference>
<dbReference type="PDB" id="2UY7">
    <property type="method" value="X-ray"/>
    <property type="resolution" value="2.60 A"/>
    <property type="chains" value="A/C/E/G=22-239"/>
</dbReference>
<dbReference type="PDB" id="2W07">
    <property type="method" value="X-ray"/>
    <property type="resolution" value="2.20 A"/>
    <property type="chains" value="A=22-239"/>
</dbReference>
<dbReference type="PDB" id="2WMP">
    <property type="method" value="X-ray"/>
    <property type="resolution" value="2.30 A"/>
    <property type="chains" value="A=22-239"/>
</dbReference>
<dbReference type="PDB" id="2XG4">
    <property type="method" value="X-ray"/>
    <property type="resolution" value="2.40 A"/>
    <property type="chains" value="A=22-239"/>
</dbReference>
<dbReference type="PDB" id="2XG5">
    <property type="method" value="X-ray"/>
    <property type="resolution" value="2.00 A"/>
    <property type="chains" value="A=22-239"/>
</dbReference>
<dbReference type="PDB" id="3DPA">
    <property type="method" value="X-ray"/>
    <property type="resolution" value="2.50 A"/>
    <property type="chains" value="A=22-239"/>
</dbReference>
<dbReference type="PDB" id="3ME0">
    <property type="method" value="X-ray"/>
    <property type="resolution" value="2.03 A"/>
    <property type="chains" value="A=22-239"/>
</dbReference>
<dbReference type="PDB" id="5K93">
    <property type="method" value="X-ray"/>
    <property type="resolution" value="2.70 A"/>
    <property type="chains" value="A/B=22-237"/>
</dbReference>
<dbReference type="PDB" id="6CD2">
    <property type="method" value="X-ray"/>
    <property type="resolution" value="3.70 A"/>
    <property type="chains" value="A=22-236"/>
</dbReference>
<dbReference type="PDB" id="7LHG">
    <property type="method" value="EM"/>
    <property type="resolution" value="3.80 A"/>
    <property type="chains" value="D=1-239"/>
</dbReference>
<dbReference type="PDB" id="7LHH">
    <property type="method" value="EM"/>
    <property type="resolution" value="7.20 A"/>
    <property type="chains" value="D=22-239"/>
</dbReference>
<dbReference type="PDB" id="7LHI">
    <property type="method" value="EM"/>
    <property type="resolution" value="7.60 A"/>
    <property type="chains" value="D=22-239"/>
</dbReference>
<dbReference type="PDBsum" id="1N0L"/>
<dbReference type="PDBsum" id="1PDK"/>
<dbReference type="PDBsum" id="1QPP"/>
<dbReference type="PDBsum" id="1QPX"/>
<dbReference type="PDBsum" id="2J2Z"/>
<dbReference type="PDBsum" id="2J7L"/>
<dbReference type="PDBsum" id="2UY6"/>
<dbReference type="PDBsum" id="2UY7"/>
<dbReference type="PDBsum" id="2W07"/>
<dbReference type="PDBsum" id="2WMP"/>
<dbReference type="PDBsum" id="2XG4"/>
<dbReference type="PDBsum" id="2XG5"/>
<dbReference type="PDBsum" id="3DPA"/>
<dbReference type="PDBsum" id="3ME0"/>
<dbReference type="PDBsum" id="5K93"/>
<dbReference type="PDBsum" id="6CD2"/>
<dbReference type="PDBsum" id="7LHG"/>
<dbReference type="PDBsum" id="7LHH"/>
<dbReference type="PDBsum" id="7LHI"/>
<dbReference type="EMDB" id="EMD-23339"/>
<dbReference type="EMDB" id="EMD-23340"/>
<dbReference type="EMDB" id="EMD-23341"/>
<dbReference type="SMR" id="P15319"/>
<dbReference type="DIP" id="DIP-6196N"/>
<dbReference type="IntAct" id="P15319">
    <property type="interactions" value="7"/>
</dbReference>
<dbReference type="MINT" id="P15319"/>
<dbReference type="BindingDB" id="P15319"/>
<dbReference type="ChEMBL" id="CHEMBL3309037"/>
<dbReference type="OMA" id="FICNGNT"/>
<dbReference type="EvolutionaryTrace" id="P15319"/>
<dbReference type="GO" id="GO:0030288">
    <property type="term" value="C:outer membrane-bounded periplasmic space"/>
    <property type="evidence" value="ECO:0007669"/>
    <property type="project" value="InterPro"/>
</dbReference>
<dbReference type="GO" id="GO:0071555">
    <property type="term" value="P:cell wall organization"/>
    <property type="evidence" value="ECO:0007669"/>
    <property type="project" value="InterPro"/>
</dbReference>
<dbReference type="GO" id="GO:0061077">
    <property type="term" value="P:chaperone-mediated protein folding"/>
    <property type="evidence" value="ECO:0007669"/>
    <property type="project" value="InterPro"/>
</dbReference>
<dbReference type="FunFam" id="2.60.40.10:FF:000458">
    <property type="entry name" value="Molecular chaperone FimC"/>
    <property type="match status" value="1"/>
</dbReference>
<dbReference type="Gene3D" id="2.60.40.10">
    <property type="entry name" value="Immunoglobulins"/>
    <property type="match status" value="2"/>
</dbReference>
<dbReference type="InterPro" id="IPR013783">
    <property type="entry name" value="Ig-like_fold"/>
</dbReference>
<dbReference type="InterPro" id="IPR008962">
    <property type="entry name" value="PapD-like_sf"/>
</dbReference>
<dbReference type="InterPro" id="IPR050643">
    <property type="entry name" value="Periplasmic_pilus_chap"/>
</dbReference>
<dbReference type="InterPro" id="IPR036316">
    <property type="entry name" value="Pili_assmbl_chap_C_dom_sf"/>
</dbReference>
<dbReference type="InterPro" id="IPR001829">
    <property type="entry name" value="Pili_assmbl_chaperone_bac"/>
</dbReference>
<dbReference type="InterPro" id="IPR016148">
    <property type="entry name" value="Pili_assmbl_chaperone_C"/>
</dbReference>
<dbReference type="InterPro" id="IPR018046">
    <property type="entry name" value="Pili_assmbl_chaperone_CS"/>
</dbReference>
<dbReference type="InterPro" id="IPR016147">
    <property type="entry name" value="Pili_assmbl_chaperone_N"/>
</dbReference>
<dbReference type="PANTHER" id="PTHR30251:SF5">
    <property type="entry name" value="FIMBRIAL CHAPARONE PROTEIN"/>
    <property type="match status" value="1"/>
</dbReference>
<dbReference type="PANTHER" id="PTHR30251">
    <property type="entry name" value="PILUS ASSEMBLY CHAPERONE"/>
    <property type="match status" value="1"/>
</dbReference>
<dbReference type="Pfam" id="PF02753">
    <property type="entry name" value="PapD_C"/>
    <property type="match status" value="1"/>
</dbReference>
<dbReference type="Pfam" id="PF00345">
    <property type="entry name" value="PapD_N"/>
    <property type="match status" value="1"/>
</dbReference>
<dbReference type="PRINTS" id="PR00969">
    <property type="entry name" value="CHAPERONPILI"/>
</dbReference>
<dbReference type="SUPFAM" id="SSF49354">
    <property type="entry name" value="PapD-like"/>
    <property type="match status" value="1"/>
</dbReference>
<dbReference type="SUPFAM" id="SSF49584">
    <property type="entry name" value="Periplasmic chaperone C-domain"/>
    <property type="match status" value="1"/>
</dbReference>
<dbReference type="PROSITE" id="PS00635">
    <property type="entry name" value="PILI_CHAPERONE"/>
    <property type="match status" value="1"/>
</dbReference>